<gene>
    <name type="primary">Mapkbp1</name>
    <name type="synonym">Jnkbp1</name>
    <name type="synonym">Kiaa0596</name>
</gene>
<comment type="function">
    <text evidence="1 3">Negative regulator of NOD2 function. It down-regulates NOD2-induced processes such as activation of NF-kappa-B signaling, IL8 secretion and antibacterial response (By similarity). Involved in JNK signaling pathway (PubMed:10471813).</text>
</comment>
<comment type="subunit">
    <text evidence="1 3">Can form homodimers (via C-terminus). Interacts (via C-terminus) with WDR62 (via C-terminus). Interacts with MAPK9. Interacts (via N-terminus) with NOD2; the interaction is enhanced in presence of muramyl dipeptide (MDP) (By similarity). Interacts with MAPK10 (PubMed:10471813).</text>
</comment>
<comment type="subcellular location">
    <subcellularLocation>
        <location evidence="1">Cytoplasm</location>
    </subcellularLocation>
    <subcellularLocation>
        <location evidence="1">Nucleus</location>
    </subcellularLocation>
    <subcellularLocation>
        <location evidence="1">Cytoplasm</location>
        <location evidence="1">Cytoskeleton</location>
        <location evidence="1">Spindle pole</location>
    </subcellularLocation>
    <text evidence="1">Not detected in the cilium. Localized around the poles of the mitotic spindle from prophase to anaphase in mitotic cells.</text>
</comment>
<comment type="alternative products">
    <event type="alternative splicing"/>
    <isoform>
        <id>Q6NS57-1</id>
        <name>1</name>
        <sequence type="displayed"/>
    </isoform>
    <isoform>
        <id>Q6NS57-2</id>
        <name>2</name>
        <sequence type="described" ref="VSP_033636"/>
    </isoform>
</comment>
<comment type="tissue specificity">
    <text evidence="3">Ubiquitously expressed. Highest expression observed in brain.</text>
</comment>
<comment type="domain">
    <text evidence="1">The N-terminal WD40 domain is necessary for the interaction with NOD2 and down-regulation of NOD2 function.</text>
</comment>
<feature type="chain" id="PRO_0000334159" description="Mitogen-activated protein kinase-binding protein 1">
    <location>
        <begin position="1"/>
        <end position="1503"/>
    </location>
</feature>
<feature type="repeat" description="WD 1">
    <location>
        <begin position="89"/>
        <end position="130"/>
    </location>
</feature>
<feature type="repeat" description="WD 2">
    <location>
        <begin position="133"/>
        <end position="174"/>
    </location>
</feature>
<feature type="repeat" description="WD 3">
    <location>
        <begin position="176"/>
        <end position="214"/>
    </location>
</feature>
<feature type="repeat" description="WD 4">
    <location>
        <begin position="271"/>
        <end position="310"/>
    </location>
</feature>
<feature type="repeat" description="WD 5">
    <location>
        <begin position="337"/>
        <end position="376"/>
    </location>
</feature>
<feature type="repeat" description="WD 6">
    <location>
        <begin position="382"/>
        <end position="431"/>
    </location>
</feature>
<feature type="repeat" description="WD 7">
    <location>
        <begin position="472"/>
        <end position="511"/>
    </location>
</feature>
<feature type="repeat" description="WD 8">
    <location>
        <begin position="514"/>
        <end position="556"/>
    </location>
</feature>
<feature type="repeat" description="WD 9">
    <location>
        <begin position="560"/>
        <end position="601"/>
    </location>
</feature>
<feature type="repeat" description="WD 10">
    <location>
        <begin position="609"/>
        <end position="648"/>
    </location>
</feature>
<feature type="repeat" description="WD 11">
    <location>
        <begin position="654"/>
        <end position="693"/>
    </location>
</feature>
<feature type="repeat" description="WD 12">
    <location>
        <begin position="696"/>
        <end position="735"/>
    </location>
</feature>
<feature type="region of interest" description="Disordered" evidence="2">
    <location>
        <begin position="745"/>
        <end position="817"/>
    </location>
</feature>
<feature type="region of interest" description="Disordered" evidence="2">
    <location>
        <begin position="874"/>
        <end position="917"/>
    </location>
</feature>
<feature type="region of interest" description="Disordered" evidence="2">
    <location>
        <begin position="951"/>
        <end position="1176"/>
    </location>
</feature>
<feature type="region of interest" description="Disordered" evidence="2">
    <location>
        <begin position="1217"/>
        <end position="1238"/>
    </location>
</feature>
<feature type="region of interest" description="Disordered" evidence="2">
    <location>
        <begin position="1369"/>
        <end position="1391"/>
    </location>
</feature>
<feature type="compositionally biased region" description="Acidic residues" evidence="2">
    <location>
        <begin position="784"/>
        <end position="796"/>
    </location>
</feature>
<feature type="compositionally biased region" description="Polar residues" evidence="2">
    <location>
        <begin position="905"/>
        <end position="917"/>
    </location>
</feature>
<feature type="compositionally biased region" description="Polar residues" evidence="2">
    <location>
        <begin position="957"/>
        <end position="972"/>
    </location>
</feature>
<feature type="compositionally biased region" description="Acidic residues" evidence="2">
    <location>
        <begin position="1028"/>
        <end position="1043"/>
    </location>
</feature>
<feature type="compositionally biased region" description="Basic and acidic residues" evidence="2">
    <location>
        <begin position="1058"/>
        <end position="1068"/>
    </location>
</feature>
<feature type="compositionally biased region" description="Polar residues" evidence="2">
    <location>
        <begin position="1089"/>
        <end position="1129"/>
    </location>
</feature>
<feature type="modified residue" description="Phosphoserine" evidence="1">
    <location>
        <position position="1193"/>
    </location>
</feature>
<feature type="splice variant" id="VSP_033636" description="In isoform 2." evidence="4">
    <original>R</original>
    <variation>RNTDSFT</variation>
    <location>
        <position position="274"/>
    </location>
</feature>
<feature type="sequence conflict" description="In Ref. 1; BAA85449." evidence="5" ref="1">
    <original>D</original>
    <variation>E</variation>
    <location>
        <position position="59"/>
    </location>
</feature>
<feature type="sequence conflict" description="In Ref. 1; BAA85449 and 2; CAM21732/CAM22679." evidence="5" ref="1 2">
    <original>S</original>
    <variation>P</variation>
    <location>
        <position position="68"/>
    </location>
</feature>
<feature type="sequence conflict" description="In Ref. 1; BAA85449." evidence="5" ref="1">
    <original>P</original>
    <variation>L</variation>
    <location>
        <position position="406"/>
    </location>
</feature>
<feature type="sequence conflict" description="In Ref. 1; BAA85449." evidence="5" ref="1">
    <original>V</original>
    <variation>E</variation>
    <location>
        <position position="545"/>
    </location>
</feature>
<feature type="sequence conflict" description="In Ref. 1; BAA85449." evidence="5" ref="1">
    <original>AEL</original>
    <variation>RER</variation>
    <location>
        <begin position="740"/>
        <end position="742"/>
    </location>
</feature>
<feature type="sequence conflict" description="In Ref. 1; BAA85449 and 4; BAC65605." evidence="5" ref="1 4">
    <original>G</original>
    <variation>A</variation>
    <location>
        <position position="900"/>
    </location>
</feature>
<feature type="sequence conflict" description="In Ref. 1; BAA85449." evidence="5" ref="1">
    <original>H</original>
    <variation>D</variation>
    <location>
        <position position="925"/>
    </location>
</feature>
<feature type="sequence conflict" description="In Ref. 1; BAA85449 and 4; BAC65605." evidence="5" ref="1 4">
    <original>H</original>
    <variation>R</variation>
    <location>
        <position position="1056"/>
    </location>
</feature>
<feature type="sequence conflict" description="In Ref. 1; BAA85449." evidence="5" ref="1">
    <original>H</original>
    <variation>L</variation>
    <location>
        <position position="1067"/>
    </location>
</feature>
<feature type="sequence conflict" description="In Ref. 1; BAA85449 and 4; BAC65605." evidence="5" ref="1 4">
    <original>Q</original>
    <variation>R</variation>
    <location>
        <position position="1090"/>
    </location>
</feature>
<feature type="sequence conflict" description="In Ref. 1; BAA85449." evidence="5" ref="1">
    <original>S</original>
    <variation>L</variation>
    <location>
        <position position="1103"/>
    </location>
</feature>
<feature type="sequence conflict" description="In Ref. 4; BAC65605." evidence="5" ref="4">
    <original>EPSLSSSGLALTS</original>
    <variation>YGPPHMALLT</variation>
    <location>
        <begin position="1107"/>
        <end position="1119"/>
    </location>
</feature>
<feature type="sequence conflict" description="In Ref. 1; BAA85449 and 4; BAC65605." evidence="5" ref="1 4">
    <original>H</original>
    <variation>R</variation>
    <location>
        <position position="1167"/>
    </location>
</feature>
<feature type="sequence conflict" description="In Ref. 1; BAA85449 and 4; BAC65605." evidence="5" ref="1 4">
    <original>Q</original>
    <variation>R</variation>
    <location>
        <position position="1212"/>
    </location>
</feature>
<feature type="sequence conflict" description="In Ref. 1; BAA85449 and 4; BAC65605." evidence="5" ref="1 4">
    <original>V</original>
    <variation>A</variation>
    <location>
        <position position="1267"/>
    </location>
</feature>
<feature type="sequence conflict" description="In Ref. 1; BAA85449." evidence="5" ref="1">
    <original>A</original>
    <variation>T</variation>
    <location>
        <position position="1310"/>
    </location>
</feature>
<feature type="sequence conflict" description="In Ref. 1; BAA85449." evidence="5" ref="1">
    <original>VSLG</original>
    <variation>REPR</variation>
    <location>
        <begin position="1321"/>
        <end position="1324"/>
    </location>
</feature>
<feature type="sequence conflict" description="In Ref. 1; BAA85449." evidence="5" ref="1">
    <original>A</original>
    <variation>R</variation>
    <location>
        <position position="1359"/>
    </location>
</feature>
<feature type="sequence conflict" description="In Ref. 1; BAA85449." evidence="5" ref="1">
    <original>GP</original>
    <variation>A</variation>
    <location>
        <begin position="1370"/>
        <end position="1371"/>
    </location>
</feature>
<feature type="sequence conflict" description="In Ref. 1; BAA85449 and 4; BAC65605." evidence="5" ref="1 4">
    <original>Y</original>
    <variation>C</variation>
    <location>
        <position position="1432"/>
    </location>
</feature>
<feature type="sequence conflict" description="In Ref. 1; BAA85449." evidence="5" ref="1">
    <original>S</original>
    <variation>P</variation>
    <location>
        <position position="1452"/>
    </location>
</feature>
<feature type="sequence conflict" description="In Ref. 1; BAA85449." evidence="5" ref="1">
    <original>G</original>
    <variation>A</variation>
    <location>
        <position position="1476"/>
    </location>
</feature>
<proteinExistence type="evidence at protein level"/>
<name>MABP1_MOUSE</name>
<keyword id="KW-0025">Alternative splicing</keyword>
<keyword id="KW-0963">Cytoplasm</keyword>
<keyword id="KW-0206">Cytoskeleton</keyword>
<keyword id="KW-0539">Nucleus</keyword>
<keyword id="KW-0597">Phosphoprotein</keyword>
<keyword id="KW-1185">Reference proteome</keyword>
<keyword id="KW-0677">Repeat</keyword>
<keyword id="KW-0853">WD repeat</keyword>
<reference key="1">
    <citation type="journal article" date="1999" name="FEBS Lett.">
        <title>A novel Jun N-terminal kinase (JNK)-binding protein that enhances the activation of JNK by MEK kinase 1 and TGF-beta-activated kinase 1.</title>
        <authorList>
            <person name="Koyano S."/>
            <person name="Ito M."/>
            <person name="Takamatsu N."/>
            <person name="Shiba T."/>
            <person name="Yamamoto K."/>
            <person name="Yoshioka K."/>
        </authorList>
    </citation>
    <scope>NUCLEOTIDE SEQUENCE [MRNA] (ISOFORM 2)</scope>
    <scope>FUNCTION</scope>
    <scope>INTERACTION WITH MAPK10</scope>
    <scope>TISSUE SPECIFICITY</scope>
    <source>
        <tissue>Brain</tissue>
    </source>
</reference>
<reference key="2">
    <citation type="journal article" date="2009" name="PLoS Biol.">
        <title>Lineage-specific biology revealed by a finished genome assembly of the mouse.</title>
        <authorList>
            <person name="Church D.M."/>
            <person name="Goodstadt L."/>
            <person name="Hillier L.W."/>
            <person name="Zody M.C."/>
            <person name="Goldstein S."/>
            <person name="She X."/>
            <person name="Bult C.J."/>
            <person name="Agarwala R."/>
            <person name="Cherry J.L."/>
            <person name="DiCuccio M."/>
            <person name="Hlavina W."/>
            <person name="Kapustin Y."/>
            <person name="Meric P."/>
            <person name="Maglott D."/>
            <person name="Birtle Z."/>
            <person name="Marques A.C."/>
            <person name="Graves T."/>
            <person name="Zhou S."/>
            <person name="Teague B."/>
            <person name="Potamousis K."/>
            <person name="Churas C."/>
            <person name="Place M."/>
            <person name="Herschleb J."/>
            <person name="Runnheim R."/>
            <person name="Forrest D."/>
            <person name="Amos-Landgraf J."/>
            <person name="Schwartz D.C."/>
            <person name="Cheng Z."/>
            <person name="Lindblad-Toh K."/>
            <person name="Eichler E.E."/>
            <person name="Ponting C.P."/>
        </authorList>
    </citation>
    <scope>NUCLEOTIDE SEQUENCE [LARGE SCALE GENOMIC DNA]</scope>
    <source>
        <strain>C57BL/6J</strain>
    </source>
</reference>
<reference key="3">
    <citation type="journal article" date="2004" name="Genome Res.">
        <title>The status, quality, and expansion of the NIH full-length cDNA project: the Mammalian Gene Collection (MGC).</title>
        <authorList>
            <consortium name="The MGC Project Team"/>
        </authorList>
    </citation>
    <scope>NUCLEOTIDE SEQUENCE [LARGE SCALE MRNA] (ISOFORM 1)</scope>
    <source>
        <strain>C57BL/6J</strain>
        <tissue>Brain</tissue>
    </source>
</reference>
<reference key="4">
    <citation type="journal article" date="2003" name="DNA Res.">
        <title>Prediction of the coding sequences of mouse homologues of KIAA gene: II. The complete nucleotide sequences of 400 mouse KIAA-homologous cDNAs identified by screening of terminal sequences of cDNA clones randomly sampled from size-fractionated libraries.</title>
        <authorList>
            <person name="Okazaki N."/>
            <person name="Kikuno R."/>
            <person name="Ohara R."/>
            <person name="Inamoto S."/>
            <person name="Aizawa H."/>
            <person name="Yuasa S."/>
            <person name="Nakajima D."/>
            <person name="Nagase T."/>
            <person name="Ohara O."/>
            <person name="Koga H."/>
        </authorList>
    </citation>
    <scope>NUCLEOTIDE SEQUENCE [LARGE SCALE MRNA] OF 441-1503</scope>
    <source>
        <tissue>Brain</tissue>
    </source>
</reference>
<reference key="5">
    <citation type="journal article" date="2010" name="Cell">
        <title>A tissue-specific atlas of mouse protein phosphorylation and expression.</title>
        <authorList>
            <person name="Huttlin E.L."/>
            <person name="Jedrychowski M.P."/>
            <person name="Elias J.E."/>
            <person name="Goswami T."/>
            <person name="Rad R."/>
            <person name="Beausoleil S.A."/>
            <person name="Villen J."/>
            <person name="Haas W."/>
            <person name="Sowa M.E."/>
            <person name="Gygi S.P."/>
        </authorList>
    </citation>
    <scope>IDENTIFICATION BY MASS SPECTROMETRY [LARGE SCALE ANALYSIS]</scope>
    <source>
        <tissue>Testis</tissue>
    </source>
</reference>
<accession>Q6NS57</accession>
<accession>A2AWL8</accession>
<accession>Q80TW5</accession>
<accession>Q9R0L0</accession>
<evidence type="ECO:0000250" key="1">
    <source>
        <dbReference type="UniProtKB" id="O60336"/>
    </source>
</evidence>
<evidence type="ECO:0000256" key="2">
    <source>
        <dbReference type="SAM" id="MobiDB-lite"/>
    </source>
</evidence>
<evidence type="ECO:0000269" key="3">
    <source>
    </source>
</evidence>
<evidence type="ECO:0000303" key="4">
    <source>
    </source>
</evidence>
<evidence type="ECO:0000305" key="5"/>
<organism>
    <name type="scientific">Mus musculus</name>
    <name type="common">Mouse</name>
    <dbReference type="NCBI Taxonomy" id="10090"/>
    <lineage>
        <taxon>Eukaryota</taxon>
        <taxon>Metazoa</taxon>
        <taxon>Chordata</taxon>
        <taxon>Craniata</taxon>
        <taxon>Vertebrata</taxon>
        <taxon>Euteleostomi</taxon>
        <taxon>Mammalia</taxon>
        <taxon>Eutheria</taxon>
        <taxon>Euarchontoglires</taxon>
        <taxon>Glires</taxon>
        <taxon>Rodentia</taxon>
        <taxon>Myomorpha</taxon>
        <taxon>Muroidea</taxon>
        <taxon>Muridae</taxon>
        <taxon>Murinae</taxon>
        <taxon>Mus</taxon>
        <taxon>Mus</taxon>
    </lineage>
</organism>
<dbReference type="EMBL" id="AB029482">
    <property type="protein sequence ID" value="BAA85449.1"/>
    <property type="molecule type" value="mRNA"/>
</dbReference>
<dbReference type="EMBL" id="AL954662">
    <property type="protein sequence ID" value="CAM21732.1"/>
    <property type="molecule type" value="Genomic_DNA"/>
</dbReference>
<dbReference type="EMBL" id="AL833774">
    <property type="protein sequence ID" value="CAM21732.1"/>
    <property type="status" value="JOINED"/>
    <property type="molecule type" value="Genomic_DNA"/>
</dbReference>
<dbReference type="EMBL" id="AL833774">
    <property type="protein sequence ID" value="CAM22679.1"/>
    <property type="molecule type" value="Genomic_DNA"/>
</dbReference>
<dbReference type="EMBL" id="AL954662">
    <property type="protein sequence ID" value="CAM22679.1"/>
    <property type="status" value="JOINED"/>
    <property type="molecule type" value="Genomic_DNA"/>
</dbReference>
<dbReference type="EMBL" id="BC070449">
    <property type="protein sequence ID" value="AAH70449.1"/>
    <property type="molecule type" value="mRNA"/>
</dbReference>
<dbReference type="EMBL" id="AK122323">
    <property type="protein sequence ID" value="BAC65605.3"/>
    <property type="molecule type" value="Transcribed_RNA"/>
</dbReference>
<dbReference type="CCDS" id="CCDS16612.1">
    <molecule id="Q6NS57-1"/>
</dbReference>
<dbReference type="CCDS" id="CCDS89541.1">
    <molecule id="Q6NS57-2"/>
</dbReference>
<dbReference type="RefSeq" id="NP_036071.3">
    <property type="nucleotide sequence ID" value="NM_011941.3"/>
</dbReference>
<dbReference type="SMR" id="Q6NS57"/>
<dbReference type="BioGRID" id="204947">
    <property type="interactions" value="8"/>
</dbReference>
<dbReference type="ELM" id="Q6NS57"/>
<dbReference type="FunCoup" id="Q6NS57">
    <property type="interactions" value="1102"/>
</dbReference>
<dbReference type="STRING" id="10090.ENSMUSP00000068516"/>
<dbReference type="GlyGen" id="Q6NS57">
    <property type="glycosylation" value="3 sites"/>
</dbReference>
<dbReference type="iPTMnet" id="Q6NS57"/>
<dbReference type="PhosphoSitePlus" id="Q6NS57"/>
<dbReference type="PaxDb" id="10090-ENSMUSP00000068516"/>
<dbReference type="ProteomicsDB" id="291991">
    <molecule id="Q6NS57-1"/>
</dbReference>
<dbReference type="ProteomicsDB" id="291992">
    <molecule id="Q6NS57-2"/>
</dbReference>
<dbReference type="Pumba" id="Q6NS57"/>
<dbReference type="DNASU" id="26390"/>
<dbReference type="GeneID" id="26390"/>
<dbReference type="KEGG" id="mmu:26390"/>
<dbReference type="UCSC" id="uc008lux.2">
    <molecule id="Q6NS57-2"/>
    <property type="organism name" value="mouse"/>
</dbReference>
<dbReference type="AGR" id="MGI:1347004"/>
<dbReference type="CTD" id="23005"/>
<dbReference type="MGI" id="MGI:1347004">
    <property type="gene designation" value="Mapkbp1"/>
</dbReference>
<dbReference type="eggNOG" id="KOG1408">
    <property type="taxonomic scope" value="Eukaryota"/>
</dbReference>
<dbReference type="InParanoid" id="Q6NS57"/>
<dbReference type="OrthoDB" id="6154712at2759"/>
<dbReference type="PhylomeDB" id="Q6NS57"/>
<dbReference type="TreeFam" id="TF323254"/>
<dbReference type="BioGRID-ORCS" id="26390">
    <property type="hits" value="2 hits in 78 CRISPR screens"/>
</dbReference>
<dbReference type="ChiTaRS" id="Mapkbp1">
    <property type="organism name" value="mouse"/>
</dbReference>
<dbReference type="PRO" id="PR:Q6NS57"/>
<dbReference type="Proteomes" id="UP000000589">
    <property type="component" value="Unplaced"/>
</dbReference>
<dbReference type="RNAct" id="Q6NS57">
    <property type="molecule type" value="protein"/>
</dbReference>
<dbReference type="GO" id="GO:0005737">
    <property type="term" value="C:cytoplasm"/>
    <property type="evidence" value="ECO:0000250"/>
    <property type="project" value="UniProtKB"/>
</dbReference>
<dbReference type="GO" id="GO:0097431">
    <property type="term" value="C:mitotic spindle pole"/>
    <property type="evidence" value="ECO:0000250"/>
    <property type="project" value="UniProtKB"/>
</dbReference>
<dbReference type="GO" id="GO:0005634">
    <property type="term" value="C:nucleus"/>
    <property type="evidence" value="ECO:0007669"/>
    <property type="project" value="UniProtKB-SubCell"/>
</dbReference>
<dbReference type="GO" id="GO:0043124">
    <property type="term" value="P:negative regulation of canonical NF-kappaB signal transduction"/>
    <property type="evidence" value="ECO:0000250"/>
    <property type="project" value="UniProtKB"/>
</dbReference>
<dbReference type="GO" id="GO:1900425">
    <property type="term" value="P:negative regulation of defense response to bacterium"/>
    <property type="evidence" value="ECO:0000250"/>
    <property type="project" value="UniProtKB"/>
</dbReference>
<dbReference type="GO" id="GO:0032717">
    <property type="term" value="P:negative regulation of interleukin-8 production"/>
    <property type="evidence" value="ECO:0000250"/>
    <property type="project" value="UniProtKB"/>
</dbReference>
<dbReference type="GO" id="GO:0046330">
    <property type="term" value="P:positive regulation of JNK cascade"/>
    <property type="evidence" value="ECO:0000314"/>
    <property type="project" value="MGI"/>
</dbReference>
<dbReference type="FunFam" id="2.130.10.10:FF:000091">
    <property type="entry name" value="mitogen-activated protein kinase-binding protein 1 isoform X1"/>
    <property type="match status" value="1"/>
</dbReference>
<dbReference type="FunFam" id="2.130.10.10:FF:000314">
    <property type="entry name" value="mitogen-activated protein kinase-binding protein 1 isoform X1"/>
    <property type="match status" value="1"/>
</dbReference>
<dbReference type="FunFam" id="2.130.10.10:FF:000046">
    <property type="entry name" value="WD repeat-containing protein 62 isoform 1"/>
    <property type="match status" value="1"/>
</dbReference>
<dbReference type="FunFam" id="2.130.10.10:FF:000124">
    <property type="entry name" value="WD repeat-containing protein 62 isoform 1"/>
    <property type="match status" value="1"/>
</dbReference>
<dbReference type="Gene3D" id="2.130.10.10">
    <property type="entry name" value="YVTN repeat-like/Quinoprotein amine dehydrogenase"/>
    <property type="match status" value="4"/>
</dbReference>
<dbReference type="InterPro" id="IPR055292">
    <property type="entry name" value="MABP1"/>
</dbReference>
<dbReference type="InterPro" id="IPR015943">
    <property type="entry name" value="WD40/YVTN_repeat-like_dom_sf"/>
</dbReference>
<dbReference type="InterPro" id="IPR056161">
    <property type="entry name" value="WD40_MABP1-WDR62_1st"/>
</dbReference>
<dbReference type="InterPro" id="IPR056162">
    <property type="entry name" value="WD40_MABP1-WDR62_2nd"/>
</dbReference>
<dbReference type="InterPro" id="IPR036322">
    <property type="entry name" value="WD40_repeat_dom_sf"/>
</dbReference>
<dbReference type="InterPro" id="IPR001680">
    <property type="entry name" value="WD40_rpt"/>
</dbReference>
<dbReference type="InterPro" id="IPR056364">
    <property type="entry name" value="WDR62-MABP1_CC"/>
</dbReference>
<dbReference type="PANTHER" id="PTHR44813">
    <property type="entry name" value="MITOGEN-ACTIVATED PROTEIN KINASE-BINDING PROTEIN 1"/>
    <property type="match status" value="1"/>
</dbReference>
<dbReference type="PANTHER" id="PTHR44813:SF1">
    <property type="entry name" value="MITOGEN-ACTIVATED PROTEIN KINASE-BINDING PROTEIN 1"/>
    <property type="match status" value="1"/>
</dbReference>
<dbReference type="Pfam" id="PF24780">
    <property type="entry name" value="WD40_MABP1-WDR62_1st"/>
    <property type="match status" value="1"/>
</dbReference>
<dbReference type="Pfam" id="PF24782">
    <property type="entry name" value="WD40_MABP1-WDR62_2nd"/>
    <property type="match status" value="1"/>
</dbReference>
<dbReference type="Pfam" id="PF24795">
    <property type="entry name" value="WDR62-MABP1_CC"/>
    <property type="match status" value="1"/>
</dbReference>
<dbReference type="SMART" id="SM00320">
    <property type="entry name" value="WD40"/>
    <property type="match status" value="12"/>
</dbReference>
<dbReference type="SUPFAM" id="SSF50978">
    <property type="entry name" value="WD40 repeat-like"/>
    <property type="match status" value="2"/>
</dbReference>
<dbReference type="PROSITE" id="PS50082">
    <property type="entry name" value="WD_REPEATS_2"/>
    <property type="match status" value="1"/>
</dbReference>
<dbReference type="PROSITE" id="PS50294">
    <property type="entry name" value="WD_REPEATS_REGION"/>
    <property type="match status" value="3"/>
</dbReference>
<protein>
    <recommendedName>
        <fullName>Mitogen-activated protein kinase-binding protein 1</fullName>
    </recommendedName>
    <alternativeName>
        <fullName>JNK-binding protein 1</fullName>
        <shortName>JNKBP-1</shortName>
    </alternativeName>
</protein>
<sequence length="1503" mass="162892">MMAGEGSTITSRIKNLLRSPSIKLRRSKAGNRREDLSSKVTLEKVLGVTVSGGRGLACDPRSGLVAYSAGCVVVLFNPRKHKQHHILNSSRKTITALAFSPDGKYLVTGESGHMPAVRVWDVAERSQVAELQEHKYGVACVAFSPSAKYIVSVGYQHDMIVNVWAWKKNIVVASNKVSSRVTAVSFSEDCSYFVTAGNRHIKFWYLDDSKTSKVNATVPLLGRSGLLGELRNNLFTDVACGRGEKADSTFCITSSGLLCEFSDRRLLDKWVELRTTVAHCISVTQEYIFCGCADGTVRLFNPSNLHFLSTLPRPHALGTDIASITEASRLFSGGVNARYPDTIALTFDPTNQWLSCVYNDHSIYVWDVRDPKKVGKVYSALYHSSCVWSVEVYPEIKDSHQACLPPSSFITCSSDNTIRLWNTESSGVHGSTLHRNILSNDLIKIIYVDGNTQALLDTELPGGDKADGSLMDPRVGIRSVCISPNGQHLASGDRMGTLRIHELQSLSEMLKVEAHDSEILCLEYSKPDTGLKLLASASRDRLIHVLDAGREYSLQQTLDEHSSSITAVKFAASDGQVRMISCGADKSIYFRTAQKSGEGVQFTRTHHVVRKTTLYDMDVEPSWKYTAIGCQDRNIRIFNISSGKQKKLFKGSQGEDGTLIKVQTDPSGIYIATSCSDKNLSIFDFSSGECVATMFGHSEIVTGMKFSNDCKHLISVSGDSCIFVWRLSSEMTISMRQRLAELRQRQRGIKQQGPTSPQRASGAKQHHAPVVPPSGPALSSDSDKEGEDEGTEEEELPALPILSKSTKKELASGSSPALLRSLSHWEMSRAQETMEYLDPAPVANTGPKRRGRWAQPGVELSVRSMLDLRQIETLAPSPRGPSQDSLAVSPAGPGKHGPQGPELSCVSQNERAPRLQTSQPCSCPHIIQLLSQEEGVFAQDLEPAPIEDGIVYPEPSDSPTMDTSAFQVQAPTGGSLGRMYPGSRGSEKHSPDSACSVDYSSSRLSSPEHPNEDSESTEPLSVDGISSDLEEPAEGDEDEEEEGGTGLCGLQEGGPHTPDQEQFLKQHFETLANGTAPGGPARVLERTESQSISSRFLLQVQTSPLREPSLSSSGLALTSRPDQVSQVSGEQLKGSGATPPGAPPEMEPSSGNSGPKQVAPVLLTRRHNNLDNSWASKKMAATRPLAGLQKAQSVHSLVPQDEVPSSRPLLFQEAETQGSLGSLPQAGGCSSQPHSYQNHTTSSMAKLARSISVGENPGLATEPQAPVPIRISPFNKLALPSRAHLVLDIPKPLPDRPTLTTFSPVSKGLAHNETEQSGPLVSLGKAHTTVEKHSCLGEGTTHKSRTECQAYPGPNHPCAQQLPVNNLLQGPESLQPLSPEKTRNPVESSRPGVALSQDSELALSLQQCEQLVAELQGNVRQAVELYRAVTSYKTPSAEQSHITRLLRDTFSSVRQELEVLAGAVLSSPGGSPGAVGAEQTQALLEQYSELLLRAVERRMERRL</sequence>